<proteinExistence type="evidence at transcript level"/>
<organism>
    <name type="scientific">Prunus armeniaca</name>
    <name type="common">Apricot</name>
    <name type="synonym">Armeniaca vulgaris</name>
    <dbReference type="NCBI Taxonomy" id="36596"/>
    <lineage>
        <taxon>Eukaryota</taxon>
        <taxon>Viridiplantae</taxon>
        <taxon>Streptophyta</taxon>
        <taxon>Embryophyta</taxon>
        <taxon>Tracheophyta</taxon>
        <taxon>Spermatophyta</taxon>
        <taxon>Magnoliopsida</taxon>
        <taxon>eudicotyledons</taxon>
        <taxon>Gunneridae</taxon>
        <taxon>Pentapetalae</taxon>
        <taxon>rosids</taxon>
        <taxon>fabids</taxon>
        <taxon>Rosales</taxon>
        <taxon>Rosaceae</taxon>
        <taxon>Amygdaloideae</taxon>
        <taxon>Amygdaleae</taxon>
        <taxon>Prunus</taxon>
    </lineage>
</organism>
<gene>
    <name type="primary">RPS4</name>
</gene>
<feature type="chain" id="PRO_0000130836" description="Small ribosomal subunit protein eS4">
    <location>
        <begin position="1"/>
        <end position="261"/>
    </location>
</feature>
<feature type="domain" description="S4 RNA-binding">
    <location>
        <begin position="42"/>
        <end position="100"/>
    </location>
</feature>
<sequence>MARGLKKHLKRLNAPKHWMLDKLGGAFAPKPSSGPHKSRECLPLILILRNRLKYALTYREVVSILMQRHILVDGKIHFCIRLSDVVSIPKTNENFRLLYDTKGRFRLHSIRDEESKFKLCKVRSVQFGQKGIPYINTYDGRTIRYPDPLIKANDTIKLDLETNKITDFIKFDVGNVVMVTGGRNRGRVGVIKNREKHKGSFETIHVQDATGHEFATRLGNVFTIGKGTKPWVSLPKGKGIKLTILEEAKKRQAAAQTAATA</sequence>
<keyword id="KW-0963">Cytoplasm</keyword>
<keyword id="KW-0687">Ribonucleoprotein</keyword>
<keyword id="KW-0689">Ribosomal protein</keyword>
<keyword id="KW-0694">RNA-binding</keyword>
<keyword id="KW-0699">rRNA-binding</keyword>
<protein>
    <recommendedName>
        <fullName evidence="1">Small ribosomal subunit protein eS4</fullName>
    </recommendedName>
    <alternativeName>
        <fullName>40S ribosomal protein S4</fullName>
    </alternativeName>
</protein>
<comment type="subcellular location">
    <subcellularLocation>
        <location>Cytoplasm</location>
    </subcellularLocation>
</comment>
<comment type="similarity">
    <text evidence="1">Belongs to the eukaryotic ribosomal protein eS4 family.</text>
</comment>
<dbReference type="EMBL" id="AF071891">
    <property type="protein sequence ID" value="AAC24585.1"/>
    <property type="molecule type" value="mRNA"/>
</dbReference>
<dbReference type="SMR" id="O81363"/>
<dbReference type="GO" id="GO:0022627">
    <property type="term" value="C:cytosolic small ribosomal subunit"/>
    <property type="evidence" value="ECO:0007669"/>
    <property type="project" value="TreeGrafter"/>
</dbReference>
<dbReference type="GO" id="GO:0019843">
    <property type="term" value="F:rRNA binding"/>
    <property type="evidence" value="ECO:0007669"/>
    <property type="project" value="UniProtKB-KW"/>
</dbReference>
<dbReference type="GO" id="GO:0003735">
    <property type="term" value="F:structural constituent of ribosome"/>
    <property type="evidence" value="ECO:0007669"/>
    <property type="project" value="InterPro"/>
</dbReference>
<dbReference type="GO" id="GO:0006412">
    <property type="term" value="P:translation"/>
    <property type="evidence" value="ECO:0007669"/>
    <property type="project" value="InterPro"/>
</dbReference>
<dbReference type="CDD" id="cd06087">
    <property type="entry name" value="KOW_RPS4"/>
    <property type="match status" value="1"/>
</dbReference>
<dbReference type="FunFam" id="2.30.30.30:FF:000005">
    <property type="entry name" value="40S ribosomal protein S4"/>
    <property type="match status" value="1"/>
</dbReference>
<dbReference type="FunFam" id="2.40.50.740:FF:000001">
    <property type="entry name" value="40S ribosomal protein S4"/>
    <property type="match status" value="1"/>
</dbReference>
<dbReference type="FunFam" id="3.10.290.10:FF:000002">
    <property type="entry name" value="40S ribosomal protein S4"/>
    <property type="match status" value="1"/>
</dbReference>
<dbReference type="Gene3D" id="2.30.30.30">
    <property type="match status" value="1"/>
</dbReference>
<dbReference type="Gene3D" id="2.40.50.740">
    <property type="match status" value="1"/>
</dbReference>
<dbReference type="Gene3D" id="3.10.290.10">
    <property type="entry name" value="RNA-binding S4 domain"/>
    <property type="match status" value="1"/>
</dbReference>
<dbReference type="HAMAP" id="MF_00485">
    <property type="entry name" value="Ribosomal_eS4"/>
    <property type="match status" value="1"/>
</dbReference>
<dbReference type="InterPro" id="IPR005824">
    <property type="entry name" value="KOW"/>
</dbReference>
<dbReference type="InterPro" id="IPR014722">
    <property type="entry name" value="Rib_uL2_dom2"/>
</dbReference>
<dbReference type="InterPro" id="IPR000876">
    <property type="entry name" value="Ribosomal_eS4"/>
</dbReference>
<dbReference type="InterPro" id="IPR032277">
    <property type="entry name" value="Ribosomal_eS4_C"/>
</dbReference>
<dbReference type="InterPro" id="IPR013845">
    <property type="entry name" value="Ribosomal_eS4_central_region"/>
</dbReference>
<dbReference type="InterPro" id="IPR038237">
    <property type="entry name" value="Ribosomal_eS4_central_sf"/>
</dbReference>
<dbReference type="InterPro" id="IPR041982">
    <property type="entry name" value="Ribosomal_eS4_KOW"/>
</dbReference>
<dbReference type="InterPro" id="IPR013843">
    <property type="entry name" value="Ribosomal_eS4_N"/>
</dbReference>
<dbReference type="InterPro" id="IPR018199">
    <property type="entry name" value="Ribosomal_eS4_N_CS"/>
</dbReference>
<dbReference type="InterPro" id="IPR036986">
    <property type="entry name" value="S4_RNA-bd_sf"/>
</dbReference>
<dbReference type="PANTHER" id="PTHR11581">
    <property type="entry name" value="30S/40S RIBOSOMAL PROTEIN S4"/>
    <property type="match status" value="1"/>
</dbReference>
<dbReference type="PANTHER" id="PTHR11581:SF0">
    <property type="entry name" value="SMALL RIBOSOMAL SUBUNIT PROTEIN ES4"/>
    <property type="match status" value="1"/>
</dbReference>
<dbReference type="Pfam" id="PF16121">
    <property type="entry name" value="40S_S4_C"/>
    <property type="match status" value="1"/>
</dbReference>
<dbReference type="Pfam" id="PF00467">
    <property type="entry name" value="KOW"/>
    <property type="match status" value="1"/>
</dbReference>
<dbReference type="Pfam" id="PF00900">
    <property type="entry name" value="Ribosomal_S4e"/>
    <property type="match status" value="1"/>
</dbReference>
<dbReference type="Pfam" id="PF08071">
    <property type="entry name" value="RS4NT"/>
    <property type="match status" value="1"/>
</dbReference>
<dbReference type="PIRSF" id="PIRSF002116">
    <property type="entry name" value="Ribosomal_S4"/>
    <property type="match status" value="1"/>
</dbReference>
<dbReference type="SMART" id="SM00739">
    <property type="entry name" value="KOW"/>
    <property type="match status" value="1"/>
</dbReference>
<dbReference type="PROSITE" id="PS00528">
    <property type="entry name" value="RIBOSOMAL_S4E"/>
    <property type="match status" value="1"/>
</dbReference>
<accession>O81363</accession>
<reference key="1">
    <citation type="submission" date="1998-06" db="EMBL/GenBank/DDBJ databases">
        <title>Molecular cloning and nucleotide sequence of a 40S ribosomal protein S4.</title>
        <authorList>
            <person name="Mbeguie-A-Mbeguie D."/>
            <person name="Fils-Lycaon B.R."/>
        </authorList>
    </citation>
    <scope>NUCLEOTIDE SEQUENCE [MRNA]</scope>
    <source>
        <strain>cv. Bergeron</strain>
        <tissue>Mesocarp</tissue>
    </source>
</reference>
<evidence type="ECO:0000305" key="1"/>
<name>RS4_PRUAR</name>